<reference key="1">
    <citation type="journal article" date="2008" name="BMC Genomics">
        <title>The linear chromosome of the plant-pathogenic mycoplasma 'Candidatus Phytoplasma mali'.</title>
        <authorList>
            <person name="Kube M."/>
            <person name="Schneider B."/>
            <person name="Kuhl H."/>
            <person name="Dandekar T."/>
            <person name="Heitmann K."/>
            <person name="Migdoll A.M."/>
            <person name="Reinhardt R."/>
            <person name="Seemueller E."/>
        </authorList>
    </citation>
    <scope>NUCLEOTIDE SEQUENCE [LARGE SCALE GENOMIC DNA]</scope>
    <source>
        <strain>AT</strain>
    </source>
</reference>
<organism>
    <name type="scientific">Phytoplasma mali (strain AT)</name>
    <dbReference type="NCBI Taxonomy" id="482235"/>
    <lineage>
        <taxon>Bacteria</taxon>
        <taxon>Bacillati</taxon>
        <taxon>Mycoplasmatota</taxon>
        <taxon>Mollicutes</taxon>
        <taxon>Acholeplasmatales</taxon>
        <taxon>Acholeplasmataceae</taxon>
        <taxon>Candidatus Phytoplasma</taxon>
        <taxon>16SrX (Apple proliferation group)</taxon>
    </lineage>
</organism>
<sequence length="186" mass="21624">MYSYIKGKVVNNGQNFVIVDNNNIGYHIIVSNPYFYEINKEYKFFVHFHIKENLQILYGFNDNKNLLFFKKLLDVPTIGPKSALMLSETDNLEQVFQAIENNDNVYLRKFPGIGIKSAQQIILKLKGDLIFSEKIILNPKKTELEKILLNLGFVKKEIKSVLNQIDDKKELELMLKEVLLKLAKNI</sequence>
<comment type="function">
    <text evidence="1">The RuvA-RuvB-RuvC complex processes Holliday junction (HJ) DNA during genetic recombination and DNA repair, while the RuvA-RuvB complex plays an important role in the rescue of blocked DNA replication forks via replication fork reversal (RFR). RuvA specifically binds to HJ cruciform DNA, conferring on it an open structure. The RuvB hexamer acts as an ATP-dependent pump, pulling dsDNA into and through the RuvAB complex. HJ branch migration allows RuvC to scan DNA until it finds its consensus sequence, where it cleaves and resolves the cruciform DNA.</text>
</comment>
<comment type="subunit">
    <text evidence="1">Homotetramer. Forms an RuvA(8)-RuvB(12)-Holliday junction (HJ) complex. HJ DNA is sandwiched between 2 RuvA tetramers; dsDNA enters through RuvA and exits via RuvB. An RuvB hexamer assembles on each DNA strand where it exits the tetramer. Each RuvB hexamer is contacted by two RuvA subunits (via domain III) on 2 adjacent RuvB subunits; this complex drives branch migration. In the full resolvosome a probable DNA-RuvA(4)-RuvB(12)-RuvC(2) complex forms which resolves the HJ.</text>
</comment>
<comment type="subcellular location">
    <subcellularLocation>
        <location evidence="1">Cytoplasm</location>
    </subcellularLocation>
</comment>
<comment type="domain">
    <text evidence="1">Has three domains with a flexible linker between the domains II and III and assumes an 'L' shape. Domain III is highly mobile and contacts RuvB.</text>
</comment>
<comment type="similarity">
    <text evidence="1">Belongs to the RuvA family.</text>
</comment>
<dbReference type="EMBL" id="CU469464">
    <property type="protein sequence ID" value="CAP18355.1"/>
    <property type="molecule type" value="Genomic_DNA"/>
</dbReference>
<dbReference type="SMR" id="B3R0J1"/>
<dbReference type="STRING" id="37692.ATP_00168"/>
<dbReference type="KEGG" id="pml:ATP_00168"/>
<dbReference type="eggNOG" id="COG0632">
    <property type="taxonomic scope" value="Bacteria"/>
</dbReference>
<dbReference type="HOGENOM" id="CLU_087936_1_0_14"/>
<dbReference type="Proteomes" id="UP000002020">
    <property type="component" value="Chromosome"/>
</dbReference>
<dbReference type="GO" id="GO:0005737">
    <property type="term" value="C:cytoplasm"/>
    <property type="evidence" value="ECO:0007669"/>
    <property type="project" value="UniProtKB-SubCell"/>
</dbReference>
<dbReference type="GO" id="GO:0048476">
    <property type="term" value="C:Holliday junction resolvase complex"/>
    <property type="evidence" value="ECO:0007669"/>
    <property type="project" value="UniProtKB-UniRule"/>
</dbReference>
<dbReference type="GO" id="GO:0005524">
    <property type="term" value="F:ATP binding"/>
    <property type="evidence" value="ECO:0007669"/>
    <property type="project" value="InterPro"/>
</dbReference>
<dbReference type="GO" id="GO:0000400">
    <property type="term" value="F:four-way junction DNA binding"/>
    <property type="evidence" value="ECO:0007669"/>
    <property type="project" value="UniProtKB-UniRule"/>
</dbReference>
<dbReference type="GO" id="GO:0009378">
    <property type="term" value="F:four-way junction helicase activity"/>
    <property type="evidence" value="ECO:0007669"/>
    <property type="project" value="InterPro"/>
</dbReference>
<dbReference type="GO" id="GO:0006310">
    <property type="term" value="P:DNA recombination"/>
    <property type="evidence" value="ECO:0007669"/>
    <property type="project" value="UniProtKB-UniRule"/>
</dbReference>
<dbReference type="GO" id="GO:0006281">
    <property type="term" value="P:DNA repair"/>
    <property type="evidence" value="ECO:0007669"/>
    <property type="project" value="UniProtKB-UniRule"/>
</dbReference>
<dbReference type="Gene3D" id="1.10.150.20">
    <property type="entry name" value="5' to 3' exonuclease, C-terminal subdomain"/>
    <property type="match status" value="1"/>
</dbReference>
<dbReference type="Gene3D" id="2.40.50.140">
    <property type="entry name" value="Nucleic acid-binding proteins"/>
    <property type="match status" value="1"/>
</dbReference>
<dbReference type="HAMAP" id="MF_00031">
    <property type="entry name" value="DNA_HJ_migration_RuvA"/>
    <property type="match status" value="1"/>
</dbReference>
<dbReference type="InterPro" id="IPR013849">
    <property type="entry name" value="DNA_helicase_Holl-junc_RuvA_I"/>
</dbReference>
<dbReference type="InterPro" id="IPR003583">
    <property type="entry name" value="Hlx-hairpin-Hlx_DNA-bd_motif"/>
</dbReference>
<dbReference type="InterPro" id="IPR012340">
    <property type="entry name" value="NA-bd_OB-fold"/>
</dbReference>
<dbReference type="InterPro" id="IPR000085">
    <property type="entry name" value="RuvA"/>
</dbReference>
<dbReference type="InterPro" id="IPR010994">
    <property type="entry name" value="RuvA_2-like"/>
</dbReference>
<dbReference type="NCBIfam" id="TIGR00084">
    <property type="entry name" value="ruvA"/>
    <property type="match status" value="1"/>
</dbReference>
<dbReference type="Pfam" id="PF14520">
    <property type="entry name" value="HHH_5"/>
    <property type="match status" value="1"/>
</dbReference>
<dbReference type="Pfam" id="PF01330">
    <property type="entry name" value="RuvA_N"/>
    <property type="match status" value="1"/>
</dbReference>
<dbReference type="SMART" id="SM00278">
    <property type="entry name" value="HhH1"/>
    <property type="match status" value="2"/>
</dbReference>
<dbReference type="SUPFAM" id="SSF50249">
    <property type="entry name" value="Nucleic acid-binding proteins"/>
    <property type="match status" value="1"/>
</dbReference>
<dbReference type="SUPFAM" id="SSF47781">
    <property type="entry name" value="RuvA domain 2-like"/>
    <property type="match status" value="1"/>
</dbReference>
<name>RUVA_PHYMT</name>
<accession>B3R0J1</accession>
<evidence type="ECO:0000255" key="1">
    <source>
        <dbReference type="HAMAP-Rule" id="MF_00031"/>
    </source>
</evidence>
<keyword id="KW-0963">Cytoplasm</keyword>
<keyword id="KW-0227">DNA damage</keyword>
<keyword id="KW-0233">DNA recombination</keyword>
<keyword id="KW-0234">DNA repair</keyword>
<keyword id="KW-0238">DNA-binding</keyword>
<keyword id="KW-1185">Reference proteome</keyword>
<feature type="chain" id="PRO_1000195169" description="Holliday junction branch migration complex subunit RuvA">
    <location>
        <begin position="1"/>
        <end position="186"/>
    </location>
</feature>
<feature type="region of interest" description="Domain I" evidence="1">
    <location>
        <begin position="1"/>
        <end position="61"/>
    </location>
</feature>
<feature type="region of interest" description="Domain II" evidence="1">
    <location>
        <begin position="62"/>
        <end position="134"/>
    </location>
</feature>
<feature type="region of interest" description="Flexible linker" evidence="1">
    <location>
        <begin position="134"/>
        <end position="135"/>
    </location>
</feature>
<feature type="region of interest" description="Domain III" evidence="1">
    <location>
        <begin position="136"/>
        <end position="186"/>
    </location>
</feature>
<proteinExistence type="inferred from homology"/>
<gene>
    <name evidence="1" type="primary">ruvA</name>
    <name type="ordered locus">ATP_00168</name>
</gene>
<protein>
    <recommendedName>
        <fullName evidence="1">Holliday junction branch migration complex subunit RuvA</fullName>
    </recommendedName>
</protein>